<name>FLIH_BORBU</name>
<gene>
    <name type="primary">fliH</name>
    <name type="ordered locus">BB_0289</name>
</gene>
<comment type="function">
    <text evidence="1">Needed for flagellar regrowth and assembly.</text>
</comment>
<comment type="subcellular location">
    <subcellularLocation>
        <location evidence="2">Cytoplasm</location>
    </subcellularLocation>
</comment>
<comment type="similarity">
    <text evidence="2">Belongs to the FliH family.</text>
</comment>
<dbReference type="EMBL" id="U43739">
    <property type="protein sequence ID" value="AAA85612.1"/>
    <property type="molecule type" value="Genomic_DNA"/>
</dbReference>
<dbReference type="EMBL" id="AE000783">
    <property type="protein sequence ID" value="AAC66659.1"/>
    <property type="molecule type" value="Genomic_DNA"/>
</dbReference>
<dbReference type="PIR" id="A70136">
    <property type="entry name" value="A70136"/>
</dbReference>
<dbReference type="RefSeq" id="NP_212423.1">
    <property type="nucleotide sequence ID" value="NC_001318.1"/>
</dbReference>
<dbReference type="RefSeq" id="WP_002556888.1">
    <property type="nucleotide sequence ID" value="NC_001318.1"/>
</dbReference>
<dbReference type="SMR" id="P52611"/>
<dbReference type="STRING" id="224326.BB_0289"/>
<dbReference type="PaxDb" id="224326-BB_0289"/>
<dbReference type="EnsemblBacteria" id="AAC66659">
    <property type="protein sequence ID" value="AAC66659"/>
    <property type="gene ID" value="BB_0289"/>
</dbReference>
<dbReference type="KEGG" id="bbu:BB_0289"/>
<dbReference type="PATRIC" id="fig|224326.49.peg.688"/>
<dbReference type="HOGENOM" id="CLU_077967_0_0_12"/>
<dbReference type="OrthoDB" id="306494at2"/>
<dbReference type="Proteomes" id="UP000001807">
    <property type="component" value="Chromosome"/>
</dbReference>
<dbReference type="GO" id="GO:0005829">
    <property type="term" value="C:cytosol"/>
    <property type="evidence" value="ECO:0007669"/>
    <property type="project" value="TreeGrafter"/>
</dbReference>
<dbReference type="GO" id="GO:0044781">
    <property type="term" value="P:bacterial-type flagellum organization"/>
    <property type="evidence" value="ECO:0007669"/>
    <property type="project" value="UniProtKB-KW"/>
</dbReference>
<dbReference type="GO" id="GO:0015031">
    <property type="term" value="P:protein transport"/>
    <property type="evidence" value="ECO:0007669"/>
    <property type="project" value="UniProtKB-KW"/>
</dbReference>
<dbReference type="InterPro" id="IPR018035">
    <property type="entry name" value="Flagellar_FliH/T3SS_HrpE"/>
</dbReference>
<dbReference type="InterPro" id="IPR051472">
    <property type="entry name" value="T3SS_Stator/FliH"/>
</dbReference>
<dbReference type="NCBIfam" id="NF005198">
    <property type="entry name" value="PRK06669.1-3"/>
    <property type="match status" value="1"/>
</dbReference>
<dbReference type="PANTHER" id="PTHR34982:SF1">
    <property type="entry name" value="FLAGELLAR ASSEMBLY PROTEIN FLIH"/>
    <property type="match status" value="1"/>
</dbReference>
<dbReference type="PANTHER" id="PTHR34982">
    <property type="entry name" value="YOP PROTEINS TRANSLOCATION PROTEIN L"/>
    <property type="match status" value="1"/>
</dbReference>
<dbReference type="Pfam" id="PF02108">
    <property type="entry name" value="FliH"/>
    <property type="match status" value="1"/>
</dbReference>
<protein>
    <recommendedName>
        <fullName>Flagellar assembly protein FliH</fullName>
    </recommendedName>
</protein>
<feature type="chain" id="PRO_0000180889" description="Flagellar assembly protein FliH">
    <location>
        <begin position="1"/>
        <end position="306"/>
    </location>
</feature>
<keyword id="KW-1005">Bacterial flagellum biogenesis</keyword>
<keyword id="KW-1006">Bacterial flagellum protein export</keyword>
<keyword id="KW-0963">Cytoplasm</keyword>
<keyword id="KW-0653">Protein transport</keyword>
<keyword id="KW-1185">Reference proteome</keyword>
<keyword id="KW-0813">Transport</keyword>
<proteinExistence type="inferred from homology"/>
<reference key="1">
    <citation type="submission" date="1995-12" db="EMBL/GenBank/DDBJ databases">
        <authorList>
            <person name="Dunn J.J."/>
            <person name="Butler-Loffredo L."/>
            <person name="Kieleczawa J."/>
            <person name="Medalle J."/>
            <person name="Luft B.J."/>
        </authorList>
    </citation>
    <scope>NUCLEOTIDE SEQUENCE [GENOMIC DNA]</scope>
    <source>
        <strain>ATCC 35210 / DSM 4680 / CIP 102532 / B31</strain>
    </source>
</reference>
<reference key="2">
    <citation type="journal article" date="1997" name="Nature">
        <title>Genomic sequence of a Lyme disease spirochaete, Borrelia burgdorferi.</title>
        <authorList>
            <person name="Fraser C.M."/>
            <person name="Casjens S."/>
            <person name="Huang W.M."/>
            <person name="Sutton G.G."/>
            <person name="Clayton R.A."/>
            <person name="Lathigra R."/>
            <person name="White O."/>
            <person name="Ketchum K.A."/>
            <person name="Dodson R.J."/>
            <person name="Hickey E.K."/>
            <person name="Gwinn M.L."/>
            <person name="Dougherty B.A."/>
            <person name="Tomb J.-F."/>
            <person name="Fleischmann R.D."/>
            <person name="Richardson D.L."/>
            <person name="Peterson J.D."/>
            <person name="Kerlavage A.R."/>
            <person name="Quackenbush J."/>
            <person name="Salzberg S.L."/>
            <person name="Hanson M."/>
            <person name="van Vugt R."/>
            <person name="Palmer N."/>
            <person name="Adams M.D."/>
            <person name="Gocayne J.D."/>
            <person name="Weidman J.F."/>
            <person name="Utterback T.R."/>
            <person name="Watthey L."/>
            <person name="McDonald L.A."/>
            <person name="Artiach P."/>
            <person name="Bowman C."/>
            <person name="Garland S.A."/>
            <person name="Fujii C."/>
            <person name="Cotton M.D."/>
            <person name="Horst K."/>
            <person name="Roberts K.M."/>
            <person name="Hatch B."/>
            <person name="Smith H.O."/>
            <person name="Venter J.C."/>
        </authorList>
    </citation>
    <scope>NUCLEOTIDE SEQUENCE [LARGE SCALE GENOMIC DNA]</scope>
    <source>
        <strain>ATCC 35210 / DSM 4680 / CIP 102532 / B31</strain>
    </source>
</reference>
<organism>
    <name type="scientific">Borreliella burgdorferi (strain ATCC 35210 / DSM 4680 / CIP 102532 / B31)</name>
    <name type="common">Borrelia burgdorferi</name>
    <dbReference type="NCBI Taxonomy" id="224326"/>
    <lineage>
        <taxon>Bacteria</taxon>
        <taxon>Pseudomonadati</taxon>
        <taxon>Spirochaetota</taxon>
        <taxon>Spirochaetia</taxon>
        <taxon>Spirochaetales</taxon>
        <taxon>Borreliaceae</taxon>
        <taxon>Borreliella</taxon>
    </lineage>
</organism>
<evidence type="ECO:0000250" key="1"/>
<evidence type="ECO:0000305" key="2"/>
<sequence>MPKVLYKSSEVDNLVKFEFVEIAKPVFESLEIKEKEGKVYDIESQISNLKEELQLLRDEKLQLEEELAKRQELAKEEVQIESKRLIEEAKAKANEVLEAAKQEADLLQKEAIYKKESIETESNAEIERLAREYEEKLKTDLEIAIAKGREEGYSKGYESGFEDFDKVMRKLHVIIASLIAERKGILESSSGQIVSLVMQIAIKVIKRITDSQKDIVLENVNEVLKRVKDKTQITIRVNLDDLDIVRHKKSDFISRFDIIENLEIIEDPNIGKGGCIIETNFGEIDARISSQLDKIEEKFKNFSLLS</sequence>
<accession>P52611</accession>